<feature type="chain" id="PRO_0000167713" description="Pyridoxine/pyridoxamine 5'-phosphate oxidase">
    <location>
        <begin position="1"/>
        <end position="212"/>
    </location>
</feature>
<feature type="binding site" evidence="1">
    <location>
        <begin position="7"/>
        <end position="10"/>
    </location>
    <ligand>
        <name>substrate</name>
    </ligand>
</feature>
<feature type="binding site" evidence="1">
    <location>
        <begin position="61"/>
        <end position="66"/>
    </location>
    <ligand>
        <name>FMN</name>
        <dbReference type="ChEBI" id="CHEBI:58210"/>
    </ligand>
</feature>
<feature type="binding site" evidence="1">
    <location>
        <position position="66"/>
    </location>
    <ligand>
        <name>substrate</name>
    </ligand>
</feature>
<feature type="binding site" evidence="1">
    <location>
        <begin position="76"/>
        <end position="77"/>
    </location>
    <ligand>
        <name>FMN</name>
        <dbReference type="ChEBI" id="CHEBI:58210"/>
    </ligand>
</feature>
<feature type="binding site" evidence="1">
    <location>
        <position position="83"/>
    </location>
    <ligand>
        <name>FMN</name>
        <dbReference type="ChEBI" id="CHEBI:58210"/>
    </ligand>
</feature>
<feature type="binding site" evidence="1">
    <location>
        <position position="105"/>
    </location>
    <ligand>
        <name>FMN</name>
        <dbReference type="ChEBI" id="CHEBI:58210"/>
    </ligand>
</feature>
<feature type="binding site" evidence="1">
    <location>
        <position position="123"/>
    </location>
    <ligand>
        <name>substrate</name>
    </ligand>
</feature>
<feature type="binding site" evidence="1">
    <location>
        <position position="127"/>
    </location>
    <ligand>
        <name>substrate</name>
    </ligand>
</feature>
<feature type="binding site" evidence="1">
    <location>
        <position position="131"/>
    </location>
    <ligand>
        <name>substrate</name>
    </ligand>
</feature>
<feature type="binding site" evidence="1">
    <location>
        <begin position="140"/>
        <end position="141"/>
    </location>
    <ligand>
        <name>FMN</name>
        <dbReference type="ChEBI" id="CHEBI:58210"/>
    </ligand>
</feature>
<feature type="binding site" evidence="1">
    <location>
        <position position="185"/>
    </location>
    <ligand>
        <name>FMN</name>
        <dbReference type="ChEBI" id="CHEBI:58210"/>
    </ligand>
</feature>
<feature type="binding site" evidence="1">
    <location>
        <begin position="191"/>
        <end position="193"/>
    </location>
    <ligand>
        <name>substrate</name>
    </ligand>
</feature>
<feature type="binding site" evidence="1">
    <location>
        <position position="195"/>
    </location>
    <ligand>
        <name>FMN</name>
        <dbReference type="ChEBI" id="CHEBI:58210"/>
    </ligand>
</feature>
<keyword id="KW-0285">Flavoprotein</keyword>
<keyword id="KW-0288">FMN</keyword>
<keyword id="KW-0560">Oxidoreductase</keyword>
<keyword id="KW-0664">Pyridoxine biosynthesis</keyword>
<keyword id="KW-1185">Reference proteome</keyword>
<proteinExistence type="inferred from homology"/>
<dbReference type="EC" id="1.4.3.5" evidence="1"/>
<dbReference type="EMBL" id="AE017340">
    <property type="protein sequence ID" value="AAV82049.1"/>
    <property type="molecule type" value="Genomic_DNA"/>
</dbReference>
<dbReference type="RefSeq" id="WP_011234460.1">
    <property type="nucleotide sequence ID" value="NC_006512.1"/>
</dbReference>
<dbReference type="SMR" id="Q5QTW7"/>
<dbReference type="STRING" id="283942.IL1209"/>
<dbReference type="GeneID" id="41336383"/>
<dbReference type="KEGG" id="ilo:IL1209"/>
<dbReference type="eggNOG" id="COG0259">
    <property type="taxonomic scope" value="Bacteria"/>
</dbReference>
<dbReference type="HOGENOM" id="CLU_032263_2_2_6"/>
<dbReference type="OrthoDB" id="9780392at2"/>
<dbReference type="UniPathway" id="UPA01068">
    <property type="reaction ID" value="UER00304"/>
</dbReference>
<dbReference type="UniPathway" id="UPA01068">
    <property type="reaction ID" value="UER00305"/>
</dbReference>
<dbReference type="Proteomes" id="UP000001171">
    <property type="component" value="Chromosome"/>
</dbReference>
<dbReference type="GO" id="GO:0010181">
    <property type="term" value="F:FMN binding"/>
    <property type="evidence" value="ECO:0007669"/>
    <property type="project" value="UniProtKB-UniRule"/>
</dbReference>
<dbReference type="GO" id="GO:0004733">
    <property type="term" value="F:pyridoxamine phosphate oxidase activity"/>
    <property type="evidence" value="ECO:0007669"/>
    <property type="project" value="UniProtKB-UniRule"/>
</dbReference>
<dbReference type="GO" id="GO:0008615">
    <property type="term" value="P:pyridoxine biosynthetic process"/>
    <property type="evidence" value="ECO:0007669"/>
    <property type="project" value="UniProtKB-KW"/>
</dbReference>
<dbReference type="Gene3D" id="2.30.110.10">
    <property type="entry name" value="Electron Transport, Fmn-binding Protein, Chain A"/>
    <property type="match status" value="1"/>
</dbReference>
<dbReference type="HAMAP" id="MF_01629">
    <property type="entry name" value="PdxH"/>
    <property type="match status" value="1"/>
</dbReference>
<dbReference type="InterPro" id="IPR000659">
    <property type="entry name" value="Pyridox_Oxase"/>
</dbReference>
<dbReference type="InterPro" id="IPR019740">
    <property type="entry name" value="Pyridox_Oxase_CS"/>
</dbReference>
<dbReference type="InterPro" id="IPR011576">
    <property type="entry name" value="Pyridox_Oxase_N"/>
</dbReference>
<dbReference type="InterPro" id="IPR019576">
    <property type="entry name" value="Pyridoxamine_oxidase_dimer_C"/>
</dbReference>
<dbReference type="InterPro" id="IPR012349">
    <property type="entry name" value="Split_barrel_FMN-bd"/>
</dbReference>
<dbReference type="NCBIfam" id="TIGR00558">
    <property type="entry name" value="pdxH"/>
    <property type="match status" value="1"/>
</dbReference>
<dbReference type="NCBIfam" id="NF004231">
    <property type="entry name" value="PRK05679.1"/>
    <property type="match status" value="1"/>
</dbReference>
<dbReference type="PANTHER" id="PTHR10851:SF0">
    <property type="entry name" value="PYRIDOXINE-5'-PHOSPHATE OXIDASE"/>
    <property type="match status" value="1"/>
</dbReference>
<dbReference type="PANTHER" id="PTHR10851">
    <property type="entry name" value="PYRIDOXINE-5-PHOSPHATE OXIDASE"/>
    <property type="match status" value="1"/>
</dbReference>
<dbReference type="Pfam" id="PF10590">
    <property type="entry name" value="PNP_phzG_C"/>
    <property type="match status" value="1"/>
</dbReference>
<dbReference type="Pfam" id="PF01243">
    <property type="entry name" value="PNPOx_N"/>
    <property type="match status" value="1"/>
</dbReference>
<dbReference type="PIRSF" id="PIRSF000190">
    <property type="entry name" value="Pyd_amn-ph_oxd"/>
    <property type="match status" value="1"/>
</dbReference>
<dbReference type="SUPFAM" id="SSF50475">
    <property type="entry name" value="FMN-binding split barrel"/>
    <property type="match status" value="1"/>
</dbReference>
<dbReference type="PROSITE" id="PS01064">
    <property type="entry name" value="PYRIDOX_OXIDASE"/>
    <property type="match status" value="1"/>
</dbReference>
<protein>
    <recommendedName>
        <fullName evidence="1">Pyridoxine/pyridoxamine 5'-phosphate oxidase</fullName>
        <ecNumber evidence="1">1.4.3.5</ecNumber>
    </recommendedName>
    <alternativeName>
        <fullName evidence="1">PNP/PMP oxidase</fullName>
        <shortName evidence="1">PNPOx</shortName>
    </alternativeName>
    <alternativeName>
        <fullName evidence="1">Pyridoxal 5'-phosphate synthase</fullName>
    </alternativeName>
</protein>
<organism>
    <name type="scientific">Idiomarina loihiensis (strain ATCC BAA-735 / DSM 15497 / L2-TR)</name>
    <dbReference type="NCBI Taxonomy" id="283942"/>
    <lineage>
        <taxon>Bacteria</taxon>
        <taxon>Pseudomonadati</taxon>
        <taxon>Pseudomonadota</taxon>
        <taxon>Gammaproteobacteria</taxon>
        <taxon>Alteromonadales</taxon>
        <taxon>Idiomarinaceae</taxon>
        <taxon>Idiomarina</taxon>
    </lineage>
</organism>
<name>PDXH_IDILO</name>
<comment type="function">
    <text evidence="1">Catalyzes the oxidation of either pyridoxine 5'-phosphate (PNP) or pyridoxamine 5'-phosphate (PMP) into pyridoxal 5'-phosphate (PLP).</text>
</comment>
<comment type="catalytic activity">
    <reaction evidence="1">
        <text>pyridoxamine 5'-phosphate + O2 + H2O = pyridoxal 5'-phosphate + H2O2 + NH4(+)</text>
        <dbReference type="Rhea" id="RHEA:15817"/>
        <dbReference type="ChEBI" id="CHEBI:15377"/>
        <dbReference type="ChEBI" id="CHEBI:15379"/>
        <dbReference type="ChEBI" id="CHEBI:16240"/>
        <dbReference type="ChEBI" id="CHEBI:28938"/>
        <dbReference type="ChEBI" id="CHEBI:58451"/>
        <dbReference type="ChEBI" id="CHEBI:597326"/>
        <dbReference type="EC" id="1.4.3.5"/>
    </reaction>
</comment>
<comment type="catalytic activity">
    <reaction evidence="1">
        <text>pyridoxine 5'-phosphate + O2 = pyridoxal 5'-phosphate + H2O2</text>
        <dbReference type="Rhea" id="RHEA:15149"/>
        <dbReference type="ChEBI" id="CHEBI:15379"/>
        <dbReference type="ChEBI" id="CHEBI:16240"/>
        <dbReference type="ChEBI" id="CHEBI:58589"/>
        <dbReference type="ChEBI" id="CHEBI:597326"/>
        <dbReference type="EC" id="1.4.3.5"/>
    </reaction>
</comment>
<comment type="cofactor">
    <cofactor evidence="1">
        <name>FMN</name>
        <dbReference type="ChEBI" id="CHEBI:58210"/>
    </cofactor>
    <text evidence="1">Binds 1 FMN per subunit.</text>
</comment>
<comment type="pathway">
    <text evidence="1">Cofactor metabolism; pyridoxal 5'-phosphate salvage; pyridoxal 5'-phosphate from pyridoxamine 5'-phosphate: step 1/1.</text>
</comment>
<comment type="pathway">
    <text evidence="1">Cofactor metabolism; pyridoxal 5'-phosphate salvage; pyridoxal 5'-phosphate from pyridoxine 5'-phosphate: step 1/1.</text>
</comment>
<comment type="subunit">
    <text evidence="1">Homodimer.</text>
</comment>
<comment type="similarity">
    <text evidence="1">Belongs to the pyridoxamine 5'-phosphate oxidase family.</text>
</comment>
<evidence type="ECO:0000255" key="1">
    <source>
        <dbReference type="HAMAP-Rule" id="MF_01629"/>
    </source>
</evidence>
<sequence length="212" mass="24824">MDLQAMRREYGLGSLHREQLEADPVKQFEKWMQQAIDSNLLSDPTAMTLATVDAEHMPSQRIVLLKGYDHTGFRFYTNKNSHKGQDISENPQVALHFAWLPLERQISIIGSAVPLDDDDNDRYFHSRPKESQVAALASQQSRPVESRDVLESHYQSLLKDYENTEVPRPQSWGGYCVHPKQFEFWQGGQHRLHDRYQYSKDRENWRITRLQP</sequence>
<reference key="1">
    <citation type="journal article" date="2004" name="Proc. Natl. Acad. Sci. U.S.A.">
        <title>Genome sequence of the deep-sea gamma-proteobacterium Idiomarina loihiensis reveals amino acid fermentation as a source of carbon and energy.</title>
        <authorList>
            <person name="Hou S."/>
            <person name="Saw J.H."/>
            <person name="Lee K.S."/>
            <person name="Freitas T.A."/>
            <person name="Belisle C."/>
            <person name="Kawarabayasi Y."/>
            <person name="Donachie S.P."/>
            <person name="Pikina A."/>
            <person name="Galperin M.Y."/>
            <person name="Koonin E.V."/>
            <person name="Makarova K.S."/>
            <person name="Omelchenko M.V."/>
            <person name="Sorokin A."/>
            <person name="Wolf Y.I."/>
            <person name="Li Q.X."/>
            <person name="Keum Y.S."/>
            <person name="Campbell S."/>
            <person name="Denery J."/>
            <person name="Aizawa S."/>
            <person name="Shibata S."/>
            <person name="Malahoff A."/>
            <person name="Alam M."/>
        </authorList>
    </citation>
    <scope>NUCLEOTIDE SEQUENCE [LARGE SCALE GENOMIC DNA]</scope>
    <source>
        <strain>ATCC BAA-735 / DSM 15497 / L2-TR</strain>
    </source>
</reference>
<accession>Q5QTW7</accession>
<gene>
    <name evidence="1" type="primary">pdxH</name>
    <name type="ordered locus">IL1209</name>
</gene>